<protein>
    <recommendedName>
        <fullName evidence="1">Small ribosomal subunit protein uS15</fullName>
    </recommendedName>
    <alternativeName>
        <fullName evidence="2">30S ribosomal protein S15</fullName>
    </alternativeName>
</protein>
<dbReference type="EMBL" id="BA000016">
    <property type="protein sequence ID" value="BAB81387.1"/>
    <property type="molecule type" value="Genomic_DNA"/>
</dbReference>
<dbReference type="RefSeq" id="WP_003449423.1">
    <property type="nucleotide sequence ID" value="NC_003366.1"/>
</dbReference>
<dbReference type="SMR" id="Q8XJS3"/>
<dbReference type="STRING" id="195102.gene:10490945"/>
<dbReference type="GeneID" id="93001781"/>
<dbReference type="KEGG" id="cpe:CPE1681"/>
<dbReference type="HOGENOM" id="CLU_148518_0_0_9"/>
<dbReference type="Proteomes" id="UP000000818">
    <property type="component" value="Chromosome"/>
</dbReference>
<dbReference type="GO" id="GO:0022627">
    <property type="term" value="C:cytosolic small ribosomal subunit"/>
    <property type="evidence" value="ECO:0007669"/>
    <property type="project" value="TreeGrafter"/>
</dbReference>
<dbReference type="GO" id="GO:0019843">
    <property type="term" value="F:rRNA binding"/>
    <property type="evidence" value="ECO:0007669"/>
    <property type="project" value="UniProtKB-UniRule"/>
</dbReference>
<dbReference type="GO" id="GO:0003735">
    <property type="term" value="F:structural constituent of ribosome"/>
    <property type="evidence" value="ECO:0007669"/>
    <property type="project" value="InterPro"/>
</dbReference>
<dbReference type="GO" id="GO:0006412">
    <property type="term" value="P:translation"/>
    <property type="evidence" value="ECO:0007669"/>
    <property type="project" value="UniProtKB-UniRule"/>
</dbReference>
<dbReference type="CDD" id="cd00353">
    <property type="entry name" value="Ribosomal_S15p_S13e"/>
    <property type="match status" value="1"/>
</dbReference>
<dbReference type="FunFam" id="1.10.287.10:FF:000002">
    <property type="entry name" value="30S ribosomal protein S15"/>
    <property type="match status" value="1"/>
</dbReference>
<dbReference type="Gene3D" id="6.10.250.3130">
    <property type="match status" value="1"/>
</dbReference>
<dbReference type="Gene3D" id="1.10.287.10">
    <property type="entry name" value="S15/NS1, RNA-binding"/>
    <property type="match status" value="1"/>
</dbReference>
<dbReference type="HAMAP" id="MF_01343_B">
    <property type="entry name" value="Ribosomal_uS15_B"/>
    <property type="match status" value="1"/>
</dbReference>
<dbReference type="InterPro" id="IPR000589">
    <property type="entry name" value="Ribosomal_uS15"/>
</dbReference>
<dbReference type="InterPro" id="IPR005290">
    <property type="entry name" value="Ribosomal_uS15_bac-type"/>
</dbReference>
<dbReference type="InterPro" id="IPR009068">
    <property type="entry name" value="uS15_NS1_RNA-bd_sf"/>
</dbReference>
<dbReference type="NCBIfam" id="TIGR00952">
    <property type="entry name" value="S15_bact"/>
    <property type="match status" value="1"/>
</dbReference>
<dbReference type="PANTHER" id="PTHR23321">
    <property type="entry name" value="RIBOSOMAL PROTEIN S15, BACTERIAL AND ORGANELLAR"/>
    <property type="match status" value="1"/>
</dbReference>
<dbReference type="PANTHER" id="PTHR23321:SF26">
    <property type="entry name" value="SMALL RIBOSOMAL SUBUNIT PROTEIN US15M"/>
    <property type="match status" value="1"/>
</dbReference>
<dbReference type="Pfam" id="PF00312">
    <property type="entry name" value="Ribosomal_S15"/>
    <property type="match status" value="1"/>
</dbReference>
<dbReference type="SMART" id="SM01387">
    <property type="entry name" value="Ribosomal_S15"/>
    <property type="match status" value="1"/>
</dbReference>
<dbReference type="SUPFAM" id="SSF47060">
    <property type="entry name" value="S15/NS1 RNA-binding domain"/>
    <property type="match status" value="1"/>
</dbReference>
<dbReference type="PROSITE" id="PS00362">
    <property type="entry name" value="RIBOSOMAL_S15"/>
    <property type="match status" value="1"/>
</dbReference>
<comment type="function">
    <text evidence="1">One of the primary rRNA binding proteins, it binds directly to 16S rRNA where it helps nucleate assembly of the platform of the 30S subunit by binding and bridging several RNA helices of the 16S rRNA.</text>
</comment>
<comment type="function">
    <text evidence="1">Forms an intersubunit bridge (bridge B4) with the 23S rRNA of the 50S subunit in the ribosome.</text>
</comment>
<comment type="subunit">
    <text evidence="1">Part of the 30S ribosomal subunit. Forms a bridge to the 50S subunit in the 70S ribosome, contacting the 23S rRNA.</text>
</comment>
<comment type="similarity">
    <text evidence="1">Belongs to the universal ribosomal protein uS15 family.</text>
</comment>
<proteinExistence type="inferred from homology"/>
<gene>
    <name evidence="1" type="primary">rpsO</name>
    <name type="ordered locus">CPE1681</name>
</gene>
<evidence type="ECO:0000255" key="1">
    <source>
        <dbReference type="HAMAP-Rule" id="MF_01343"/>
    </source>
</evidence>
<evidence type="ECO:0000305" key="2"/>
<organism>
    <name type="scientific">Clostridium perfringens (strain 13 / Type A)</name>
    <dbReference type="NCBI Taxonomy" id="195102"/>
    <lineage>
        <taxon>Bacteria</taxon>
        <taxon>Bacillati</taxon>
        <taxon>Bacillota</taxon>
        <taxon>Clostridia</taxon>
        <taxon>Eubacteriales</taxon>
        <taxon>Clostridiaceae</taxon>
        <taxon>Clostridium</taxon>
    </lineage>
</organism>
<feature type="chain" id="PRO_0000115419" description="Small ribosomal subunit protein uS15">
    <location>
        <begin position="1"/>
        <end position="87"/>
    </location>
</feature>
<sequence length="87" mass="10325">MDKIRKQEIIAKHARHEGDTGSPEVQIALLTERINSLTDHLRTHKKDHHSRRGLLMMVGQRRGLLNYLYEQDIERYRAIIKELGLRR</sequence>
<accession>Q8XJS3</accession>
<reference key="1">
    <citation type="journal article" date="2002" name="Proc. Natl. Acad. Sci. U.S.A.">
        <title>Complete genome sequence of Clostridium perfringens, an anaerobic flesh-eater.</title>
        <authorList>
            <person name="Shimizu T."/>
            <person name="Ohtani K."/>
            <person name="Hirakawa H."/>
            <person name="Ohshima K."/>
            <person name="Yamashita A."/>
            <person name="Shiba T."/>
            <person name="Ogasawara N."/>
            <person name="Hattori M."/>
            <person name="Kuhara S."/>
            <person name="Hayashi H."/>
        </authorList>
    </citation>
    <scope>NUCLEOTIDE SEQUENCE [LARGE SCALE GENOMIC DNA]</scope>
    <source>
        <strain>13 / Type A</strain>
    </source>
</reference>
<keyword id="KW-1185">Reference proteome</keyword>
<keyword id="KW-0687">Ribonucleoprotein</keyword>
<keyword id="KW-0689">Ribosomal protein</keyword>
<keyword id="KW-0694">RNA-binding</keyword>
<keyword id="KW-0699">rRNA-binding</keyword>
<name>RS15_CLOPE</name>